<evidence type="ECO:0000255" key="1">
    <source>
        <dbReference type="HAMAP-Rule" id="MF_01210"/>
    </source>
</evidence>
<sequence length="1057" mass="117186">MPKRNDIKTILVIGSGPIIIGQAAEFDYAGTQACLALKEEGYRVILVNSNPATIMTDKEIADKVYIEPLTHDFIARIIRKEQPDALLPTLGGQTGLNMAIQLHESGVLQDNNVQLLGTELTSIQQAEDREMFRTLMNDLNVPVPESDIVNTVEQAFKFKEQVGYPLIVRPAFTMGGTGGGICHNDEELHEIVSNGLHYSPATQCLLEKSIAGFKEIEYEVMRDKNDNAIVVCNMENIDPVGIHTGDSIVVAPSQTLSDVEYQMLRDVSLKVIRALGIEGGCNVQLALDPHSFDYYIIEVNPRVSRSSALASKATGYPIAKLAAKIAVGLTLDEMLNPITGTSYAAFEPTLDYVISKIPRFPFDKFEKGERELGTQMKATGEVMAIGRTYEESLLKAIRSLEYGVHHLGLPNGESFDLDYIKERISHQDDERLFFIGEAIRRGTTLEEIHNMTQIDYFFLHKFQNIIDIEHQLKEHQGDLEYLKYAKDYGFSDKTIAHRFNMTEEEVYQLRMENDIKPVYKMVDTCAAEFESSTPYYYGTYETENESIVTDKEKILVLGSGPIRIGQGVEFDYATVHAVWAIQKAGYEAIIVNNNPETVSTDFSISDKLYFEPLTEEDVMNIINLEKPKGVVVQFGGQTAINLADKLAKHGVKILGTSLENLNRAEDRKEFEALLRKINVPQPQGKTATSPEEALANAAEIGYPVVVRPSYVLGGRAMEIVDNDKELENYMTQAVKASPEHPVLVDRYLTGKEIEVDAICDGETVIIPGIMEHIERAGVHSGDSIAVYPPQTLTEDELATLEDYTIKLAKGLNIIGLINIQFVIAHDGVYVLEVNPRSSRTVPFLSKITDIPMAQLAMRAIIGEKLTDMGYQEGVQPYAEGVFVKAPVFSFNKLKNVDITLGPEMKSTGEVMGKDTTLEKALFKGLTGSGVEVKDHGTVLMTVSDKDKEEVVKLAQRLNEVGYKILATSGTANKLAEYDIPAEVVGKIGGENDLLTRIQNGDVQIVINTMTKGKEVERDGFQIRRTTVENGIPCLTSLDTANALTNVIESMTFTMRQM</sequence>
<comment type="function">
    <text evidence="1">Large subunit of the glutamine-dependent carbamoyl phosphate synthetase (CPSase). CPSase catalyzes the formation of carbamoyl phosphate from the ammonia moiety of glutamine, carbonate, and phosphate donated by ATP, constituting the first step of 2 biosynthetic pathways, one leading to arginine and/or urea and the other to pyrimidine nucleotides. The large subunit (synthetase) binds the substrates ammonia (free or transferred from glutamine from the small subunit), hydrogencarbonate and ATP and carries out an ATP-coupled ligase reaction, activating hydrogencarbonate by forming carboxy phosphate which reacts with ammonia to form carbamoyl phosphate.</text>
</comment>
<comment type="catalytic activity">
    <reaction evidence="1">
        <text>hydrogencarbonate + L-glutamine + 2 ATP + H2O = carbamoyl phosphate + L-glutamate + 2 ADP + phosphate + 2 H(+)</text>
        <dbReference type="Rhea" id="RHEA:18633"/>
        <dbReference type="ChEBI" id="CHEBI:15377"/>
        <dbReference type="ChEBI" id="CHEBI:15378"/>
        <dbReference type="ChEBI" id="CHEBI:17544"/>
        <dbReference type="ChEBI" id="CHEBI:29985"/>
        <dbReference type="ChEBI" id="CHEBI:30616"/>
        <dbReference type="ChEBI" id="CHEBI:43474"/>
        <dbReference type="ChEBI" id="CHEBI:58228"/>
        <dbReference type="ChEBI" id="CHEBI:58359"/>
        <dbReference type="ChEBI" id="CHEBI:456216"/>
        <dbReference type="EC" id="6.3.5.5"/>
    </reaction>
</comment>
<comment type="catalytic activity">
    <molecule>Carbamoyl phosphate synthase large chain</molecule>
    <reaction evidence="1">
        <text>hydrogencarbonate + NH4(+) + 2 ATP = carbamoyl phosphate + 2 ADP + phosphate + 2 H(+)</text>
        <dbReference type="Rhea" id="RHEA:18029"/>
        <dbReference type="ChEBI" id="CHEBI:15378"/>
        <dbReference type="ChEBI" id="CHEBI:17544"/>
        <dbReference type="ChEBI" id="CHEBI:28938"/>
        <dbReference type="ChEBI" id="CHEBI:30616"/>
        <dbReference type="ChEBI" id="CHEBI:43474"/>
        <dbReference type="ChEBI" id="CHEBI:58228"/>
        <dbReference type="ChEBI" id="CHEBI:456216"/>
        <dbReference type="EC" id="6.3.4.16"/>
    </reaction>
</comment>
<comment type="cofactor">
    <cofactor evidence="1">
        <name>Mg(2+)</name>
        <dbReference type="ChEBI" id="CHEBI:18420"/>
    </cofactor>
    <cofactor evidence="1">
        <name>Mn(2+)</name>
        <dbReference type="ChEBI" id="CHEBI:29035"/>
    </cofactor>
    <text evidence="1">Binds 4 Mg(2+) or Mn(2+) ions per subunit.</text>
</comment>
<comment type="pathway">
    <text evidence="1">Amino-acid biosynthesis; L-arginine biosynthesis; carbamoyl phosphate from bicarbonate: step 1/1.</text>
</comment>
<comment type="pathway">
    <text evidence="1">Pyrimidine metabolism; UMP biosynthesis via de novo pathway; (S)-dihydroorotate from bicarbonate: step 1/3.</text>
</comment>
<comment type="subunit">
    <text evidence="1">Composed of two chains; the small (or glutamine) chain promotes the hydrolysis of glutamine to ammonia, which is used by the large (or ammonia) chain to synthesize carbamoyl phosphate. Tetramer of heterodimers (alpha,beta)4.</text>
</comment>
<comment type="domain">
    <text evidence="1">The large subunit is composed of 2 ATP-grasp domains that are involved in binding the 2 ATP molecules needed for carbamoyl phosphate synthesis. The N-terminal ATP-grasp domain (referred to as the carboxyphosphate synthetic component) catalyzes the ATP-dependent phosphorylation of hydrogencarbonate to carboxyphosphate and the subsequent nucleophilic attack by ammonia to form a carbamate intermediate. The C-terminal ATP-grasp domain (referred to as the carbamoyl phosphate synthetic component) then catalyzes the phosphorylation of carbamate with the second ATP to form the end product carbamoyl phosphate. The reactive and unstable enzyme intermediates are sequentially channeled from one active site to the next through the interior of the protein over a distance of at least 96 A.</text>
</comment>
<comment type="similarity">
    <text evidence="1">Belongs to the CarB family.</text>
</comment>
<proteinExistence type="inferred from homology"/>
<dbReference type="EC" id="6.3.4.16" evidence="1"/>
<dbReference type="EC" id="6.3.5.5" evidence="1"/>
<dbReference type="EMBL" id="CP000046">
    <property type="protein sequence ID" value="AAW38052.1"/>
    <property type="molecule type" value="Genomic_DNA"/>
</dbReference>
<dbReference type="RefSeq" id="WP_001126264.1">
    <property type="nucleotide sequence ID" value="NZ_JBGOFO010000002.1"/>
</dbReference>
<dbReference type="SMR" id="Q5HGM9"/>
<dbReference type="KEGG" id="sac:SACOL1215"/>
<dbReference type="HOGENOM" id="CLU_000513_1_2_9"/>
<dbReference type="UniPathway" id="UPA00068">
    <property type="reaction ID" value="UER00171"/>
</dbReference>
<dbReference type="UniPathway" id="UPA00070">
    <property type="reaction ID" value="UER00115"/>
</dbReference>
<dbReference type="Proteomes" id="UP000000530">
    <property type="component" value="Chromosome"/>
</dbReference>
<dbReference type="GO" id="GO:0005737">
    <property type="term" value="C:cytoplasm"/>
    <property type="evidence" value="ECO:0007669"/>
    <property type="project" value="TreeGrafter"/>
</dbReference>
<dbReference type="GO" id="GO:0005524">
    <property type="term" value="F:ATP binding"/>
    <property type="evidence" value="ECO:0007669"/>
    <property type="project" value="UniProtKB-UniRule"/>
</dbReference>
<dbReference type="GO" id="GO:0004087">
    <property type="term" value="F:carbamoyl-phosphate synthase (ammonia) activity"/>
    <property type="evidence" value="ECO:0007669"/>
    <property type="project" value="RHEA"/>
</dbReference>
<dbReference type="GO" id="GO:0004088">
    <property type="term" value="F:carbamoyl-phosphate synthase (glutamine-hydrolyzing) activity"/>
    <property type="evidence" value="ECO:0007669"/>
    <property type="project" value="UniProtKB-UniRule"/>
</dbReference>
<dbReference type="GO" id="GO:0046872">
    <property type="term" value="F:metal ion binding"/>
    <property type="evidence" value="ECO:0007669"/>
    <property type="project" value="UniProtKB-KW"/>
</dbReference>
<dbReference type="GO" id="GO:0044205">
    <property type="term" value="P:'de novo' UMP biosynthetic process"/>
    <property type="evidence" value="ECO:0007669"/>
    <property type="project" value="UniProtKB-UniRule"/>
</dbReference>
<dbReference type="GO" id="GO:0006541">
    <property type="term" value="P:glutamine metabolic process"/>
    <property type="evidence" value="ECO:0007669"/>
    <property type="project" value="TreeGrafter"/>
</dbReference>
<dbReference type="GO" id="GO:0006526">
    <property type="term" value="P:L-arginine biosynthetic process"/>
    <property type="evidence" value="ECO:0007669"/>
    <property type="project" value="UniProtKB-UniRule"/>
</dbReference>
<dbReference type="CDD" id="cd01424">
    <property type="entry name" value="MGS_CPS_II"/>
    <property type="match status" value="1"/>
</dbReference>
<dbReference type="FunFam" id="1.10.1030.10:FF:000002">
    <property type="entry name" value="Carbamoyl-phosphate synthase large chain"/>
    <property type="match status" value="1"/>
</dbReference>
<dbReference type="FunFam" id="3.30.1490.20:FF:000001">
    <property type="entry name" value="Carbamoyl-phosphate synthase large chain"/>
    <property type="match status" value="1"/>
</dbReference>
<dbReference type="FunFam" id="3.30.470.20:FF:000001">
    <property type="entry name" value="Carbamoyl-phosphate synthase large chain"/>
    <property type="match status" value="1"/>
</dbReference>
<dbReference type="FunFam" id="3.30.470.20:FF:000026">
    <property type="entry name" value="Carbamoyl-phosphate synthase large chain"/>
    <property type="match status" value="1"/>
</dbReference>
<dbReference type="FunFam" id="3.40.50.1380:FF:000011">
    <property type="entry name" value="Carbamoyl-phosphate synthase large chain"/>
    <property type="match status" value="1"/>
</dbReference>
<dbReference type="FunFam" id="3.40.50.20:FF:000001">
    <property type="entry name" value="Carbamoyl-phosphate synthase large chain"/>
    <property type="match status" value="2"/>
</dbReference>
<dbReference type="Gene3D" id="3.40.50.20">
    <property type="match status" value="2"/>
</dbReference>
<dbReference type="Gene3D" id="3.30.1490.20">
    <property type="entry name" value="ATP-grasp fold, A domain"/>
    <property type="match status" value="1"/>
</dbReference>
<dbReference type="Gene3D" id="3.30.470.20">
    <property type="entry name" value="ATP-grasp fold, B domain"/>
    <property type="match status" value="2"/>
</dbReference>
<dbReference type="Gene3D" id="1.10.1030.10">
    <property type="entry name" value="Carbamoyl-phosphate synthetase, large subunit oligomerisation domain"/>
    <property type="match status" value="1"/>
</dbReference>
<dbReference type="Gene3D" id="3.40.50.1380">
    <property type="entry name" value="Methylglyoxal synthase-like domain"/>
    <property type="match status" value="1"/>
</dbReference>
<dbReference type="HAMAP" id="MF_01210_A">
    <property type="entry name" value="CPSase_L_chain_A"/>
    <property type="match status" value="1"/>
</dbReference>
<dbReference type="HAMAP" id="MF_01210_B">
    <property type="entry name" value="CPSase_L_chain_B"/>
    <property type="match status" value="1"/>
</dbReference>
<dbReference type="InterPro" id="IPR011761">
    <property type="entry name" value="ATP-grasp"/>
</dbReference>
<dbReference type="InterPro" id="IPR013815">
    <property type="entry name" value="ATP_grasp_subdomain_1"/>
</dbReference>
<dbReference type="InterPro" id="IPR006275">
    <property type="entry name" value="CarbamoylP_synth_lsu"/>
</dbReference>
<dbReference type="InterPro" id="IPR005480">
    <property type="entry name" value="CarbamoylP_synth_lsu_oligo"/>
</dbReference>
<dbReference type="InterPro" id="IPR036897">
    <property type="entry name" value="CarbamoylP_synth_lsu_oligo_sf"/>
</dbReference>
<dbReference type="InterPro" id="IPR005479">
    <property type="entry name" value="CbamoylP_synth_lsu-like_ATP-bd"/>
</dbReference>
<dbReference type="InterPro" id="IPR005483">
    <property type="entry name" value="CbamoylP_synth_lsu_CPSase_dom"/>
</dbReference>
<dbReference type="InterPro" id="IPR011607">
    <property type="entry name" value="MGS-like_dom"/>
</dbReference>
<dbReference type="InterPro" id="IPR036914">
    <property type="entry name" value="MGS-like_dom_sf"/>
</dbReference>
<dbReference type="InterPro" id="IPR033937">
    <property type="entry name" value="MGS_CPS_CarB"/>
</dbReference>
<dbReference type="InterPro" id="IPR016185">
    <property type="entry name" value="PreATP-grasp_dom_sf"/>
</dbReference>
<dbReference type="NCBIfam" id="TIGR01369">
    <property type="entry name" value="CPSaseII_lrg"/>
    <property type="match status" value="1"/>
</dbReference>
<dbReference type="NCBIfam" id="NF003671">
    <property type="entry name" value="PRK05294.1"/>
    <property type="match status" value="1"/>
</dbReference>
<dbReference type="NCBIfam" id="NF009455">
    <property type="entry name" value="PRK12815.1"/>
    <property type="match status" value="1"/>
</dbReference>
<dbReference type="PANTHER" id="PTHR11405:SF53">
    <property type="entry name" value="CARBAMOYL-PHOSPHATE SYNTHASE [AMMONIA], MITOCHONDRIAL"/>
    <property type="match status" value="1"/>
</dbReference>
<dbReference type="PANTHER" id="PTHR11405">
    <property type="entry name" value="CARBAMOYLTRANSFERASE FAMILY MEMBER"/>
    <property type="match status" value="1"/>
</dbReference>
<dbReference type="Pfam" id="PF02786">
    <property type="entry name" value="CPSase_L_D2"/>
    <property type="match status" value="2"/>
</dbReference>
<dbReference type="Pfam" id="PF02787">
    <property type="entry name" value="CPSase_L_D3"/>
    <property type="match status" value="1"/>
</dbReference>
<dbReference type="Pfam" id="PF02142">
    <property type="entry name" value="MGS"/>
    <property type="match status" value="1"/>
</dbReference>
<dbReference type="PRINTS" id="PR00098">
    <property type="entry name" value="CPSASE"/>
</dbReference>
<dbReference type="SMART" id="SM01096">
    <property type="entry name" value="CPSase_L_D3"/>
    <property type="match status" value="1"/>
</dbReference>
<dbReference type="SMART" id="SM01209">
    <property type="entry name" value="GARS_A"/>
    <property type="match status" value="1"/>
</dbReference>
<dbReference type="SMART" id="SM00851">
    <property type="entry name" value="MGS"/>
    <property type="match status" value="1"/>
</dbReference>
<dbReference type="SUPFAM" id="SSF48108">
    <property type="entry name" value="Carbamoyl phosphate synthetase, large subunit connection domain"/>
    <property type="match status" value="1"/>
</dbReference>
<dbReference type="SUPFAM" id="SSF56059">
    <property type="entry name" value="Glutathione synthetase ATP-binding domain-like"/>
    <property type="match status" value="2"/>
</dbReference>
<dbReference type="SUPFAM" id="SSF52335">
    <property type="entry name" value="Methylglyoxal synthase-like"/>
    <property type="match status" value="1"/>
</dbReference>
<dbReference type="SUPFAM" id="SSF52440">
    <property type="entry name" value="PreATP-grasp domain"/>
    <property type="match status" value="2"/>
</dbReference>
<dbReference type="PROSITE" id="PS50975">
    <property type="entry name" value="ATP_GRASP"/>
    <property type="match status" value="2"/>
</dbReference>
<dbReference type="PROSITE" id="PS00866">
    <property type="entry name" value="CPSASE_1"/>
    <property type="match status" value="2"/>
</dbReference>
<dbReference type="PROSITE" id="PS00867">
    <property type="entry name" value="CPSASE_2"/>
    <property type="match status" value="2"/>
</dbReference>
<dbReference type="PROSITE" id="PS51855">
    <property type="entry name" value="MGS"/>
    <property type="match status" value="1"/>
</dbReference>
<keyword id="KW-0028">Amino-acid biosynthesis</keyword>
<keyword id="KW-0055">Arginine biosynthesis</keyword>
<keyword id="KW-0067">ATP-binding</keyword>
<keyword id="KW-0436">Ligase</keyword>
<keyword id="KW-0460">Magnesium</keyword>
<keyword id="KW-0464">Manganese</keyword>
<keyword id="KW-0479">Metal-binding</keyword>
<keyword id="KW-0547">Nucleotide-binding</keyword>
<keyword id="KW-0665">Pyrimidine biosynthesis</keyword>
<keyword id="KW-0677">Repeat</keyword>
<organism>
    <name type="scientific">Staphylococcus aureus (strain COL)</name>
    <dbReference type="NCBI Taxonomy" id="93062"/>
    <lineage>
        <taxon>Bacteria</taxon>
        <taxon>Bacillati</taxon>
        <taxon>Bacillota</taxon>
        <taxon>Bacilli</taxon>
        <taxon>Bacillales</taxon>
        <taxon>Staphylococcaceae</taxon>
        <taxon>Staphylococcus</taxon>
    </lineage>
</organism>
<feature type="chain" id="PRO_0000145037" description="Carbamoyl phosphate synthase large chain">
    <location>
        <begin position="1"/>
        <end position="1057"/>
    </location>
</feature>
<feature type="domain" description="ATP-grasp 1" evidence="1">
    <location>
        <begin position="133"/>
        <end position="327"/>
    </location>
</feature>
<feature type="domain" description="ATP-grasp 2" evidence="1">
    <location>
        <begin position="671"/>
        <end position="861"/>
    </location>
</feature>
<feature type="domain" description="MGS-like" evidence="1">
    <location>
        <begin position="930"/>
        <end position="1057"/>
    </location>
</feature>
<feature type="region of interest" description="Carboxyphosphate synthetic domain" evidence="1">
    <location>
        <begin position="1"/>
        <end position="401"/>
    </location>
</feature>
<feature type="region of interest" description="Oligomerization domain" evidence="1">
    <location>
        <begin position="402"/>
        <end position="546"/>
    </location>
</feature>
<feature type="region of interest" description="Carbamoyl phosphate synthetic domain" evidence="1">
    <location>
        <begin position="547"/>
        <end position="929"/>
    </location>
</feature>
<feature type="region of interest" description="Allosteric domain" evidence="1">
    <location>
        <begin position="930"/>
        <end position="1057"/>
    </location>
</feature>
<feature type="binding site" evidence="1">
    <location>
        <position position="129"/>
    </location>
    <ligand>
        <name>ATP</name>
        <dbReference type="ChEBI" id="CHEBI:30616"/>
        <label>1</label>
    </ligand>
</feature>
<feature type="binding site" evidence="1">
    <location>
        <position position="169"/>
    </location>
    <ligand>
        <name>ATP</name>
        <dbReference type="ChEBI" id="CHEBI:30616"/>
        <label>1</label>
    </ligand>
</feature>
<feature type="binding site" evidence="1">
    <location>
        <position position="175"/>
    </location>
    <ligand>
        <name>ATP</name>
        <dbReference type="ChEBI" id="CHEBI:30616"/>
        <label>1</label>
    </ligand>
</feature>
<feature type="binding site" evidence="1">
    <location>
        <position position="176"/>
    </location>
    <ligand>
        <name>ATP</name>
        <dbReference type="ChEBI" id="CHEBI:30616"/>
        <label>1</label>
    </ligand>
</feature>
<feature type="binding site" evidence="1">
    <location>
        <position position="208"/>
    </location>
    <ligand>
        <name>ATP</name>
        <dbReference type="ChEBI" id="CHEBI:30616"/>
        <label>1</label>
    </ligand>
</feature>
<feature type="binding site" evidence="1">
    <location>
        <position position="210"/>
    </location>
    <ligand>
        <name>ATP</name>
        <dbReference type="ChEBI" id="CHEBI:30616"/>
        <label>1</label>
    </ligand>
</feature>
<feature type="binding site" evidence="1">
    <location>
        <position position="215"/>
    </location>
    <ligand>
        <name>ATP</name>
        <dbReference type="ChEBI" id="CHEBI:30616"/>
        <label>1</label>
    </ligand>
</feature>
<feature type="binding site" evidence="1">
    <location>
        <position position="241"/>
    </location>
    <ligand>
        <name>ATP</name>
        <dbReference type="ChEBI" id="CHEBI:30616"/>
        <label>1</label>
    </ligand>
</feature>
<feature type="binding site" evidence="1">
    <location>
        <position position="242"/>
    </location>
    <ligand>
        <name>ATP</name>
        <dbReference type="ChEBI" id="CHEBI:30616"/>
        <label>1</label>
    </ligand>
</feature>
<feature type="binding site" evidence="1">
    <location>
        <position position="243"/>
    </location>
    <ligand>
        <name>ATP</name>
        <dbReference type="ChEBI" id="CHEBI:30616"/>
        <label>1</label>
    </ligand>
</feature>
<feature type="binding site" evidence="1">
    <location>
        <position position="284"/>
    </location>
    <ligand>
        <name>ATP</name>
        <dbReference type="ChEBI" id="CHEBI:30616"/>
        <label>1</label>
    </ligand>
</feature>
<feature type="binding site" evidence="1">
    <location>
        <position position="284"/>
    </location>
    <ligand>
        <name>Mg(2+)</name>
        <dbReference type="ChEBI" id="CHEBI:18420"/>
        <label>1</label>
    </ligand>
</feature>
<feature type="binding site" evidence="1">
    <location>
        <position position="284"/>
    </location>
    <ligand>
        <name>Mn(2+)</name>
        <dbReference type="ChEBI" id="CHEBI:29035"/>
        <label>1</label>
    </ligand>
</feature>
<feature type="binding site" evidence="1">
    <location>
        <position position="298"/>
    </location>
    <ligand>
        <name>ATP</name>
        <dbReference type="ChEBI" id="CHEBI:30616"/>
        <label>1</label>
    </ligand>
</feature>
<feature type="binding site" evidence="1">
    <location>
        <position position="298"/>
    </location>
    <ligand>
        <name>Mg(2+)</name>
        <dbReference type="ChEBI" id="CHEBI:18420"/>
        <label>1</label>
    </ligand>
</feature>
<feature type="binding site" evidence="1">
    <location>
        <position position="298"/>
    </location>
    <ligand>
        <name>Mg(2+)</name>
        <dbReference type="ChEBI" id="CHEBI:18420"/>
        <label>2</label>
    </ligand>
</feature>
<feature type="binding site" evidence="1">
    <location>
        <position position="298"/>
    </location>
    <ligand>
        <name>Mn(2+)</name>
        <dbReference type="ChEBI" id="CHEBI:29035"/>
        <label>1</label>
    </ligand>
</feature>
<feature type="binding site" evidence="1">
    <location>
        <position position="298"/>
    </location>
    <ligand>
        <name>Mn(2+)</name>
        <dbReference type="ChEBI" id="CHEBI:29035"/>
        <label>2</label>
    </ligand>
</feature>
<feature type="binding site" evidence="1">
    <location>
        <position position="300"/>
    </location>
    <ligand>
        <name>Mg(2+)</name>
        <dbReference type="ChEBI" id="CHEBI:18420"/>
        <label>2</label>
    </ligand>
</feature>
<feature type="binding site" evidence="1">
    <location>
        <position position="300"/>
    </location>
    <ligand>
        <name>Mn(2+)</name>
        <dbReference type="ChEBI" id="CHEBI:29035"/>
        <label>2</label>
    </ligand>
</feature>
<feature type="binding site" evidence="1">
    <location>
        <position position="707"/>
    </location>
    <ligand>
        <name>ATP</name>
        <dbReference type="ChEBI" id="CHEBI:30616"/>
        <label>2</label>
    </ligand>
</feature>
<feature type="binding site" evidence="1">
    <location>
        <position position="746"/>
    </location>
    <ligand>
        <name>ATP</name>
        <dbReference type="ChEBI" id="CHEBI:30616"/>
        <label>2</label>
    </ligand>
</feature>
<feature type="binding site" evidence="1">
    <location>
        <position position="748"/>
    </location>
    <ligand>
        <name>ATP</name>
        <dbReference type="ChEBI" id="CHEBI:30616"/>
        <label>2</label>
    </ligand>
</feature>
<feature type="binding site" evidence="1">
    <location>
        <position position="752"/>
    </location>
    <ligand>
        <name>ATP</name>
        <dbReference type="ChEBI" id="CHEBI:30616"/>
        <label>2</label>
    </ligand>
</feature>
<feature type="binding site" evidence="1">
    <location>
        <position position="777"/>
    </location>
    <ligand>
        <name>ATP</name>
        <dbReference type="ChEBI" id="CHEBI:30616"/>
        <label>2</label>
    </ligand>
</feature>
<feature type="binding site" evidence="1">
    <location>
        <position position="778"/>
    </location>
    <ligand>
        <name>ATP</name>
        <dbReference type="ChEBI" id="CHEBI:30616"/>
        <label>2</label>
    </ligand>
</feature>
<feature type="binding site" evidence="1">
    <location>
        <position position="779"/>
    </location>
    <ligand>
        <name>ATP</name>
        <dbReference type="ChEBI" id="CHEBI:30616"/>
        <label>2</label>
    </ligand>
</feature>
<feature type="binding site" evidence="1">
    <location>
        <position position="780"/>
    </location>
    <ligand>
        <name>ATP</name>
        <dbReference type="ChEBI" id="CHEBI:30616"/>
        <label>2</label>
    </ligand>
</feature>
<feature type="binding site" evidence="1">
    <location>
        <position position="820"/>
    </location>
    <ligand>
        <name>ATP</name>
        <dbReference type="ChEBI" id="CHEBI:30616"/>
        <label>2</label>
    </ligand>
</feature>
<feature type="binding site" evidence="1">
    <location>
        <position position="820"/>
    </location>
    <ligand>
        <name>Mg(2+)</name>
        <dbReference type="ChEBI" id="CHEBI:18420"/>
        <label>3</label>
    </ligand>
</feature>
<feature type="binding site" evidence="1">
    <location>
        <position position="820"/>
    </location>
    <ligand>
        <name>Mn(2+)</name>
        <dbReference type="ChEBI" id="CHEBI:29035"/>
        <label>3</label>
    </ligand>
</feature>
<feature type="binding site" evidence="1">
    <location>
        <position position="832"/>
    </location>
    <ligand>
        <name>ATP</name>
        <dbReference type="ChEBI" id="CHEBI:30616"/>
        <label>2</label>
    </ligand>
</feature>
<feature type="binding site" evidence="1">
    <location>
        <position position="832"/>
    </location>
    <ligand>
        <name>Mg(2+)</name>
        <dbReference type="ChEBI" id="CHEBI:18420"/>
        <label>3</label>
    </ligand>
</feature>
<feature type="binding site" evidence="1">
    <location>
        <position position="832"/>
    </location>
    <ligand>
        <name>Mg(2+)</name>
        <dbReference type="ChEBI" id="CHEBI:18420"/>
        <label>4</label>
    </ligand>
</feature>
<feature type="binding site" evidence="1">
    <location>
        <position position="832"/>
    </location>
    <ligand>
        <name>Mn(2+)</name>
        <dbReference type="ChEBI" id="CHEBI:29035"/>
        <label>3</label>
    </ligand>
</feature>
<feature type="binding site" evidence="1">
    <location>
        <position position="832"/>
    </location>
    <ligand>
        <name>Mn(2+)</name>
        <dbReference type="ChEBI" id="CHEBI:29035"/>
        <label>4</label>
    </ligand>
</feature>
<feature type="binding site" evidence="1">
    <location>
        <position position="834"/>
    </location>
    <ligand>
        <name>Mg(2+)</name>
        <dbReference type="ChEBI" id="CHEBI:18420"/>
        <label>4</label>
    </ligand>
</feature>
<feature type="binding site" evidence="1">
    <location>
        <position position="834"/>
    </location>
    <ligand>
        <name>Mn(2+)</name>
        <dbReference type="ChEBI" id="CHEBI:29035"/>
        <label>4</label>
    </ligand>
</feature>
<protein>
    <recommendedName>
        <fullName evidence="1">Carbamoyl phosphate synthase large chain</fullName>
        <ecNumber evidence="1">6.3.4.16</ecNumber>
        <ecNumber evidence="1">6.3.5.5</ecNumber>
    </recommendedName>
    <alternativeName>
        <fullName evidence="1">Carbamoyl phosphate synthetase ammonia chain</fullName>
    </alternativeName>
</protein>
<accession>Q5HGM9</accession>
<reference key="1">
    <citation type="journal article" date="2005" name="J. Bacteriol.">
        <title>Insights on evolution of virulence and resistance from the complete genome analysis of an early methicillin-resistant Staphylococcus aureus strain and a biofilm-producing methicillin-resistant Staphylococcus epidermidis strain.</title>
        <authorList>
            <person name="Gill S.R."/>
            <person name="Fouts D.E."/>
            <person name="Archer G.L."/>
            <person name="Mongodin E.F."/>
            <person name="DeBoy R.T."/>
            <person name="Ravel J."/>
            <person name="Paulsen I.T."/>
            <person name="Kolonay J.F."/>
            <person name="Brinkac L.M."/>
            <person name="Beanan M.J."/>
            <person name="Dodson R.J."/>
            <person name="Daugherty S.C."/>
            <person name="Madupu R."/>
            <person name="Angiuoli S.V."/>
            <person name="Durkin A.S."/>
            <person name="Haft D.H."/>
            <person name="Vamathevan J.J."/>
            <person name="Khouri H."/>
            <person name="Utterback T.R."/>
            <person name="Lee C."/>
            <person name="Dimitrov G."/>
            <person name="Jiang L."/>
            <person name="Qin H."/>
            <person name="Weidman J."/>
            <person name="Tran K."/>
            <person name="Kang K.H."/>
            <person name="Hance I.R."/>
            <person name="Nelson K.E."/>
            <person name="Fraser C.M."/>
        </authorList>
    </citation>
    <scope>NUCLEOTIDE SEQUENCE [LARGE SCALE GENOMIC DNA]</scope>
    <source>
        <strain>COL</strain>
    </source>
</reference>
<gene>
    <name evidence="1" type="primary">carB</name>
    <name type="synonym">pyrAB</name>
    <name type="ordered locus">SACOL1215</name>
</gene>
<name>CARB_STAAC</name>